<protein>
    <recommendedName>
        <fullName>D-inositol 3-phosphate glycosyltransferase</fullName>
        <ecNumber>2.4.1.250</ecNumber>
    </recommendedName>
    <alternativeName>
        <fullName>N-acetylglucosamine-inositol-phosphate N-acetylglucosaminyltransferase</fullName>
        <shortName>GlcNAc-Ins-P N-acetylglucosaminyltransferase</shortName>
    </alternativeName>
</protein>
<proteinExistence type="inferred from homology"/>
<gene>
    <name type="primary">mshA</name>
    <name type="ordered locus">ML2443</name>
    <name type="ORF">B2168_C2_201</name>
    <name type="ORF">u2168f</name>
</gene>
<dbReference type="EC" id="2.4.1.250"/>
<dbReference type="EMBL" id="U00018">
    <property type="protein sequence ID" value="AAA17228.1"/>
    <property type="status" value="ALT_INIT"/>
    <property type="molecule type" value="Genomic_DNA"/>
</dbReference>
<dbReference type="EMBL" id="AL583925">
    <property type="protein sequence ID" value="CAC31960.1"/>
    <property type="molecule type" value="Genomic_DNA"/>
</dbReference>
<dbReference type="PIR" id="H87214">
    <property type="entry name" value="H87214"/>
</dbReference>
<dbReference type="PIR" id="S72892">
    <property type="entry name" value="S72892"/>
</dbReference>
<dbReference type="RefSeq" id="NP_302584.1">
    <property type="nucleotide sequence ID" value="NC_002677.1"/>
</dbReference>
<dbReference type="SMR" id="P54138"/>
<dbReference type="STRING" id="272631.gene:17576306"/>
<dbReference type="CAZy" id="GT4">
    <property type="family name" value="Glycosyltransferase Family 4"/>
</dbReference>
<dbReference type="KEGG" id="mle:ML2443"/>
<dbReference type="PATRIC" id="fig|272631.5.peg.4690"/>
<dbReference type="Leproma" id="ML2443"/>
<dbReference type="eggNOG" id="COG0438">
    <property type="taxonomic scope" value="Bacteria"/>
</dbReference>
<dbReference type="HOGENOM" id="CLU_009583_2_3_11"/>
<dbReference type="OrthoDB" id="9810929at2"/>
<dbReference type="Proteomes" id="UP000000806">
    <property type="component" value="Chromosome"/>
</dbReference>
<dbReference type="GO" id="GO:0008375">
    <property type="term" value="F:acetylglucosaminyltransferase activity"/>
    <property type="evidence" value="ECO:0007669"/>
    <property type="project" value="UniProtKB-UniRule"/>
</dbReference>
<dbReference type="GO" id="GO:0102710">
    <property type="term" value="F:D-inositol-3-phosphate glycosyltransferase activity"/>
    <property type="evidence" value="ECO:0007669"/>
    <property type="project" value="UniProtKB-EC"/>
</dbReference>
<dbReference type="GO" id="GO:0000287">
    <property type="term" value="F:magnesium ion binding"/>
    <property type="evidence" value="ECO:0007669"/>
    <property type="project" value="UniProtKB-UniRule"/>
</dbReference>
<dbReference type="GO" id="GO:0010125">
    <property type="term" value="P:mycothiol biosynthetic process"/>
    <property type="evidence" value="ECO:0007669"/>
    <property type="project" value="UniProtKB-UniRule"/>
</dbReference>
<dbReference type="FunFam" id="3.40.50.2000:FF:000123">
    <property type="entry name" value="D-inositol-3-phosphate glycosyltransferase"/>
    <property type="match status" value="1"/>
</dbReference>
<dbReference type="Gene3D" id="3.40.50.2000">
    <property type="entry name" value="Glycogen Phosphorylase B"/>
    <property type="match status" value="2"/>
</dbReference>
<dbReference type="HAMAP" id="MF_01695">
    <property type="entry name" value="MshA"/>
    <property type="match status" value="1"/>
</dbReference>
<dbReference type="InterPro" id="IPR001296">
    <property type="entry name" value="Glyco_trans_1"/>
</dbReference>
<dbReference type="InterPro" id="IPR028098">
    <property type="entry name" value="Glyco_trans_4-like_N"/>
</dbReference>
<dbReference type="InterPro" id="IPR017814">
    <property type="entry name" value="Mycothiol_biosynthesis_MshA"/>
</dbReference>
<dbReference type="NCBIfam" id="TIGR03449">
    <property type="entry name" value="mycothiol_MshA"/>
    <property type="match status" value="1"/>
</dbReference>
<dbReference type="PANTHER" id="PTHR12526:SF510">
    <property type="entry name" value="D-INOSITOL 3-PHOSPHATE GLYCOSYLTRANSFERASE"/>
    <property type="match status" value="1"/>
</dbReference>
<dbReference type="PANTHER" id="PTHR12526">
    <property type="entry name" value="GLYCOSYLTRANSFERASE"/>
    <property type="match status" value="1"/>
</dbReference>
<dbReference type="Pfam" id="PF13579">
    <property type="entry name" value="Glyco_trans_4_4"/>
    <property type="match status" value="1"/>
</dbReference>
<dbReference type="Pfam" id="PF00534">
    <property type="entry name" value="Glycos_transf_1"/>
    <property type="match status" value="1"/>
</dbReference>
<dbReference type="SUPFAM" id="SSF53756">
    <property type="entry name" value="UDP-Glycosyltransferase/glycogen phosphorylase"/>
    <property type="match status" value="1"/>
</dbReference>
<comment type="function">
    <text evidence="1">Catalyzes the transfer of a N-acetyl-glucosamine moiety to 1D-myo-inositol 3-phosphate to produce 1D-myo-inositol 2-acetamido-2-deoxy-glucopyranoside 3-phosphate in the mycothiol biosynthesis pathway.</text>
</comment>
<comment type="catalytic activity">
    <reaction>
        <text>1D-myo-inositol 3-phosphate + UDP-N-acetyl-alpha-D-glucosamine = 1D-myo-inositol 2-acetamido-2-deoxy-alpha-D-glucopyranoside 3-phosphate + UDP + H(+)</text>
        <dbReference type="Rhea" id="RHEA:26188"/>
        <dbReference type="ChEBI" id="CHEBI:15378"/>
        <dbReference type="ChEBI" id="CHEBI:57705"/>
        <dbReference type="ChEBI" id="CHEBI:58223"/>
        <dbReference type="ChEBI" id="CHEBI:58401"/>
        <dbReference type="ChEBI" id="CHEBI:58892"/>
        <dbReference type="EC" id="2.4.1.250"/>
    </reaction>
</comment>
<comment type="subunit">
    <text evidence="1">Homodimer.</text>
</comment>
<comment type="similarity">
    <text evidence="2">Belongs to the glycosyltransferase group 1 family. MshA subfamily.</text>
</comment>
<comment type="sequence caution" evidence="2">
    <conflict type="erroneous initiation">
        <sequence resource="EMBL-CDS" id="AAA17228"/>
    </conflict>
    <text>Truncated N-terminus.</text>
</comment>
<evidence type="ECO:0000250" key="1"/>
<evidence type="ECO:0000305" key="2"/>
<keyword id="KW-0328">Glycosyltransferase</keyword>
<keyword id="KW-0460">Magnesium</keyword>
<keyword id="KW-0479">Metal-binding</keyword>
<keyword id="KW-1185">Reference proteome</keyword>
<keyword id="KW-0808">Transferase</keyword>
<sequence>MLAVHTSPLAQPGIGDAGGMNVYVLQSALHLARRGIEVEIFTRATASADPPIVWVAPGVLVRNVVAGPFEGLDKYDLPTQLCAFAAGVLRAEAAHEPGYYDIVHSHYWLSGQVGWLARDRWAVPLVHTAHTLAAVKNAALADGDAAEPPLRSVGEQQVVDEADRMIVNTDDEARQLISIHRADPAKIDVAHPGVDLDMFRPGDRRAARAALGLPLDGNVVAFVGRIQPLKAPDIVLRAAAKLPQVRIVVAGGPSGSGLASPDGLVRLADELGITARVTFLPPQSRTNLATVFQAADLVAVPSYSESFGLVAVEAQACGTPVVAAAVGGLPVAVRDGVTGTLVFGHNVGHWADAVDQLLRLSAGPQARAISRAAVVHAAQFSWDNTTDALLASYRRAIGDFTATRQHRVRDLVATRKPRRWISRRGMGA</sequence>
<name>MSHA_MYCLE</name>
<reference key="1">
    <citation type="submission" date="1994-03" db="EMBL/GenBank/DDBJ databases">
        <authorList>
            <person name="Smith D.R."/>
            <person name="Robison K."/>
        </authorList>
    </citation>
    <scope>NUCLEOTIDE SEQUENCE [GENOMIC DNA]</scope>
</reference>
<reference key="2">
    <citation type="journal article" date="2001" name="Nature">
        <title>Massive gene decay in the leprosy bacillus.</title>
        <authorList>
            <person name="Cole S.T."/>
            <person name="Eiglmeier K."/>
            <person name="Parkhill J."/>
            <person name="James K.D."/>
            <person name="Thomson N.R."/>
            <person name="Wheeler P.R."/>
            <person name="Honore N."/>
            <person name="Garnier T."/>
            <person name="Churcher C.M."/>
            <person name="Harris D.E."/>
            <person name="Mungall K.L."/>
            <person name="Basham D."/>
            <person name="Brown D."/>
            <person name="Chillingworth T."/>
            <person name="Connor R."/>
            <person name="Davies R.M."/>
            <person name="Devlin K."/>
            <person name="Duthoy S."/>
            <person name="Feltwell T."/>
            <person name="Fraser A."/>
            <person name="Hamlin N."/>
            <person name="Holroyd S."/>
            <person name="Hornsby T."/>
            <person name="Jagels K."/>
            <person name="Lacroix C."/>
            <person name="Maclean J."/>
            <person name="Moule S."/>
            <person name="Murphy L.D."/>
            <person name="Oliver K."/>
            <person name="Quail M.A."/>
            <person name="Rajandream M.A."/>
            <person name="Rutherford K.M."/>
            <person name="Rutter S."/>
            <person name="Seeger K."/>
            <person name="Simon S."/>
            <person name="Simmonds M."/>
            <person name="Skelton J."/>
            <person name="Squares R."/>
            <person name="Squares S."/>
            <person name="Stevens K."/>
            <person name="Taylor K."/>
            <person name="Whitehead S."/>
            <person name="Woodward J.R."/>
            <person name="Barrell B.G."/>
        </authorList>
    </citation>
    <scope>NUCLEOTIDE SEQUENCE [LARGE SCALE GENOMIC DNA]</scope>
    <source>
        <strain>TN</strain>
    </source>
</reference>
<feature type="chain" id="PRO_0000080320" description="D-inositol 3-phosphate glycosyltransferase">
    <location>
        <begin position="1"/>
        <end position="428"/>
    </location>
</feature>
<feature type="binding site" evidence="1">
    <location>
        <position position="5"/>
    </location>
    <ligand>
        <name>1D-myo-inositol 3-phosphate</name>
        <dbReference type="ChEBI" id="CHEBI:58401"/>
    </ligand>
</feature>
<feature type="binding site" evidence="1">
    <location>
        <begin position="11"/>
        <end position="12"/>
    </location>
    <ligand>
        <name>UDP-N-acetyl-alpha-D-glucosamine</name>
        <dbReference type="ChEBI" id="CHEBI:57705"/>
    </ligand>
</feature>
<feature type="binding site" evidence="1">
    <location>
        <begin position="16"/>
        <end position="21"/>
    </location>
    <ligand>
        <name>1D-myo-inositol 3-phosphate</name>
        <dbReference type="ChEBI" id="CHEBI:58401"/>
    </ligand>
</feature>
<feature type="binding site" evidence="1">
    <location>
        <position position="19"/>
    </location>
    <ligand>
        <name>UDP-N-acetyl-alpha-D-glucosamine</name>
        <dbReference type="ChEBI" id="CHEBI:57705"/>
    </ligand>
</feature>
<feature type="binding site" evidence="1">
    <location>
        <position position="74"/>
    </location>
    <ligand>
        <name>1D-myo-inositol 3-phosphate</name>
        <dbReference type="ChEBI" id="CHEBI:58401"/>
    </ligand>
</feature>
<feature type="binding site" evidence="1">
    <location>
        <position position="107"/>
    </location>
    <ligand>
        <name>1D-myo-inositol 3-phosphate</name>
        <dbReference type="ChEBI" id="CHEBI:58401"/>
    </ligand>
</feature>
<feature type="binding site" evidence="1">
    <location>
        <position position="131"/>
    </location>
    <ligand>
        <name>1D-myo-inositol 3-phosphate</name>
        <dbReference type="ChEBI" id="CHEBI:58401"/>
    </ligand>
</feature>
<feature type="binding site" evidence="1">
    <location>
        <position position="151"/>
    </location>
    <ligand>
        <name>1D-myo-inositol 3-phosphate</name>
        <dbReference type="ChEBI" id="CHEBI:58401"/>
    </ligand>
</feature>
<feature type="binding site" evidence="1">
    <location>
        <position position="225"/>
    </location>
    <ligand>
        <name>UDP-N-acetyl-alpha-D-glucosamine</name>
        <dbReference type="ChEBI" id="CHEBI:57705"/>
    </ligand>
</feature>
<feature type="binding site" evidence="1">
    <location>
        <position position="230"/>
    </location>
    <ligand>
        <name>UDP-N-acetyl-alpha-D-glucosamine</name>
        <dbReference type="ChEBI" id="CHEBI:57705"/>
    </ligand>
</feature>
<feature type="binding site" evidence="1">
    <location>
        <position position="283"/>
    </location>
    <ligand>
        <name>UDP-N-acetyl-alpha-D-glucosamine</name>
        <dbReference type="ChEBI" id="CHEBI:57705"/>
    </ligand>
</feature>
<feature type="binding site" evidence="1">
    <location>
        <position position="292"/>
    </location>
    <ligand>
        <name>Mg(2+)</name>
        <dbReference type="ChEBI" id="CHEBI:18420"/>
    </ligand>
</feature>
<feature type="binding site" evidence="1">
    <location>
        <position position="293"/>
    </location>
    <ligand>
        <name>Mg(2+)</name>
        <dbReference type="ChEBI" id="CHEBI:18420"/>
    </ligand>
</feature>
<feature type="binding site" evidence="1">
    <location>
        <position position="295"/>
    </location>
    <ligand>
        <name>Mg(2+)</name>
        <dbReference type="ChEBI" id="CHEBI:18420"/>
    </ligand>
</feature>
<feature type="binding site" evidence="1">
    <location>
        <position position="305"/>
    </location>
    <ligand>
        <name>UDP-N-acetyl-alpha-D-glucosamine</name>
        <dbReference type="ChEBI" id="CHEBI:57705"/>
    </ligand>
</feature>
<feature type="binding site" evidence="1">
    <location>
        <position position="313"/>
    </location>
    <ligand>
        <name>UDP-N-acetyl-alpha-D-glucosamine</name>
        <dbReference type="ChEBI" id="CHEBI:57705"/>
    </ligand>
</feature>
<feature type="binding site" evidence="1">
    <location>
        <position position="319"/>
    </location>
    <ligand>
        <name>Mg(2+)</name>
        <dbReference type="ChEBI" id="CHEBI:18420"/>
    </ligand>
</feature>
<accession>P54138</accession>
<accession>Q9CB50</accession>
<organism>
    <name type="scientific">Mycobacterium leprae (strain TN)</name>
    <dbReference type="NCBI Taxonomy" id="272631"/>
    <lineage>
        <taxon>Bacteria</taxon>
        <taxon>Bacillati</taxon>
        <taxon>Actinomycetota</taxon>
        <taxon>Actinomycetes</taxon>
        <taxon>Mycobacteriales</taxon>
        <taxon>Mycobacteriaceae</taxon>
        <taxon>Mycobacterium</taxon>
    </lineage>
</organism>